<proteinExistence type="inferred from homology"/>
<gene>
    <name evidence="1" type="primary">rpmB</name>
    <name type="ordered locus">Abu_1793</name>
</gene>
<sequence>MSRKCAISGKGPMVGNNVSHAKNRTRRRFLPNIRTVRVTLEDGTTTKLRISAKELRTLKKHS</sequence>
<reference key="1">
    <citation type="journal article" date="2007" name="PLoS ONE">
        <title>The complete genome sequence and analysis of the Epsilonproteobacterium Arcobacter butzleri.</title>
        <authorList>
            <person name="Miller W.G."/>
            <person name="Parker C.T."/>
            <person name="Rubenfield M."/>
            <person name="Mendz G.L."/>
            <person name="Woesten M.M.S.M."/>
            <person name="Ussery D.W."/>
            <person name="Stolz J.F."/>
            <person name="Binnewies T.T."/>
            <person name="Hallin P.F."/>
            <person name="Wang G."/>
            <person name="Malek J.A."/>
            <person name="Rogosin A."/>
            <person name="Stanker L.H."/>
            <person name="Mandrell R.E."/>
        </authorList>
    </citation>
    <scope>NUCLEOTIDE SEQUENCE [LARGE SCALE GENOMIC DNA]</scope>
    <source>
        <strain>RM4018</strain>
    </source>
</reference>
<evidence type="ECO:0000255" key="1">
    <source>
        <dbReference type="HAMAP-Rule" id="MF_00373"/>
    </source>
</evidence>
<evidence type="ECO:0000305" key="2"/>
<accession>A8EVR0</accession>
<organism>
    <name type="scientific">Aliarcobacter butzleri (strain RM4018)</name>
    <name type="common">Arcobacter butzleri</name>
    <dbReference type="NCBI Taxonomy" id="367737"/>
    <lineage>
        <taxon>Bacteria</taxon>
        <taxon>Pseudomonadati</taxon>
        <taxon>Campylobacterota</taxon>
        <taxon>Epsilonproteobacteria</taxon>
        <taxon>Campylobacterales</taxon>
        <taxon>Arcobacteraceae</taxon>
        <taxon>Aliarcobacter</taxon>
    </lineage>
</organism>
<dbReference type="EMBL" id="CP000361">
    <property type="protein sequence ID" value="ABV68033.1"/>
    <property type="molecule type" value="Genomic_DNA"/>
</dbReference>
<dbReference type="RefSeq" id="WP_004511166.1">
    <property type="nucleotide sequence ID" value="NC_009850.1"/>
</dbReference>
<dbReference type="SMR" id="A8EVR0"/>
<dbReference type="STRING" id="367737.Abu_1793"/>
<dbReference type="GeneID" id="24305002"/>
<dbReference type="KEGG" id="abu:Abu_1793"/>
<dbReference type="eggNOG" id="COG0227">
    <property type="taxonomic scope" value="Bacteria"/>
</dbReference>
<dbReference type="HOGENOM" id="CLU_064548_7_2_7"/>
<dbReference type="Proteomes" id="UP000001136">
    <property type="component" value="Chromosome"/>
</dbReference>
<dbReference type="GO" id="GO:1990904">
    <property type="term" value="C:ribonucleoprotein complex"/>
    <property type="evidence" value="ECO:0007669"/>
    <property type="project" value="UniProtKB-KW"/>
</dbReference>
<dbReference type="GO" id="GO:0005840">
    <property type="term" value="C:ribosome"/>
    <property type="evidence" value="ECO:0007669"/>
    <property type="project" value="UniProtKB-KW"/>
</dbReference>
<dbReference type="GO" id="GO:0003735">
    <property type="term" value="F:structural constituent of ribosome"/>
    <property type="evidence" value="ECO:0007669"/>
    <property type="project" value="InterPro"/>
</dbReference>
<dbReference type="GO" id="GO:0006412">
    <property type="term" value="P:translation"/>
    <property type="evidence" value="ECO:0007669"/>
    <property type="project" value="UniProtKB-UniRule"/>
</dbReference>
<dbReference type="Gene3D" id="2.20.150.30">
    <property type="match status" value="1"/>
</dbReference>
<dbReference type="Gene3D" id="2.30.170.40">
    <property type="entry name" value="Ribosomal protein L28/L24"/>
    <property type="match status" value="1"/>
</dbReference>
<dbReference type="HAMAP" id="MF_00373">
    <property type="entry name" value="Ribosomal_bL28"/>
    <property type="match status" value="1"/>
</dbReference>
<dbReference type="InterPro" id="IPR050096">
    <property type="entry name" value="Bacterial_rp_bL28"/>
</dbReference>
<dbReference type="InterPro" id="IPR026569">
    <property type="entry name" value="Ribosomal_bL28"/>
</dbReference>
<dbReference type="InterPro" id="IPR034704">
    <property type="entry name" value="Ribosomal_bL28/bL31-like_sf"/>
</dbReference>
<dbReference type="InterPro" id="IPR001383">
    <property type="entry name" value="Ribosomal_bL28_bact-type"/>
</dbReference>
<dbReference type="InterPro" id="IPR037147">
    <property type="entry name" value="Ribosomal_bL28_sf"/>
</dbReference>
<dbReference type="NCBIfam" id="TIGR00009">
    <property type="entry name" value="L28"/>
    <property type="match status" value="1"/>
</dbReference>
<dbReference type="PANTHER" id="PTHR39080">
    <property type="entry name" value="50S RIBOSOMAL PROTEIN L28"/>
    <property type="match status" value="1"/>
</dbReference>
<dbReference type="PANTHER" id="PTHR39080:SF1">
    <property type="entry name" value="LARGE RIBOSOMAL SUBUNIT PROTEIN BL28A"/>
    <property type="match status" value="1"/>
</dbReference>
<dbReference type="Pfam" id="PF00830">
    <property type="entry name" value="Ribosomal_L28"/>
    <property type="match status" value="1"/>
</dbReference>
<dbReference type="SUPFAM" id="SSF143800">
    <property type="entry name" value="L28p-like"/>
    <property type="match status" value="1"/>
</dbReference>
<feature type="chain" id="PRO_1000059947" description="Large ribosomal subunit protein bL28">
    <location>
        <begin position="1"/>
        <end position="62"/>
    </location>
</feature>
<name>RL28_ALIB4</name>
<comment type="similarity">
    <text evidence="1">Belongs to the bacterial ribosomal protein bL28 family.</text>
</comment>
<protein>
    <recommendedName>
        <fullName evidence="1">Large ribosomal subunit protein bL28</fullName>
    </recommendedName>
    <alternativeName>
        <fullName evidence="2">50S ribosomal protein L28</fullName>
    </alternativeName>
</protein>
<keyword id="KW-1185">Reference proteome</keyword>
<keyword id="KW-0687">Ribonucleoprotein</keyword>
<keyword id="KW-0689">Ribosomal protein</keyword>